<organism>
    <name type="scientific">Salmonella newport (strain SL254)</name>
    <dbReference type="NCBI Taxonomy" id="423368"/>
    <lineage>
        <taxon>Bacteria</taxon>
        <taxon>Pseudomonadati</taxon>
        <taxon>Pseudomonadota</taxon>
        <taxon>Gammaproteobacteria</taxon>
        <taxon>Enterobacterales</taxon>
        <taxon>Enterobacteriaceae</taxon>
        <taxon>Salmonella</taxon>
    </lineage>
</organism>
<evidence type="ECO:0000255" key="1">
    <source>
        <dbReference type="HAMAP-Rule" id="MF_01155"/>
    </source>
</evidence>
<protein>
    <recommendedName>
        <fullName evidence="1">Chaperone modulatory protein CbpM</fullName>
    </recommendedName>
</protein>
<sequence length="101" mass="11595">MANITVTFTITEFCLHTGVTEEELNEIVGLGVIEPYEDDNADWQFDDRAASVVQRALRLREELALDWPGIAVALTLLEENSRLREENRLLLQRLSRFISHP</sequence>
<gene>
    <name evidence="1" type="primary">cbpM</name>
    <name type="ordered locus">SNSL254_A1206</name>
</gene>
<accession>B4T2U4</accession>
<reference key="1">
    <citation type="journal article" date="2011" name="J. Bacteriol.">
        <title>Comparative genomics of 28 Salmonella enterica isolates: evidence for CRISPR-mediated adaptive sublineage evolution.</title>
        <authorList>
            <person name="Fricke W.F."/>
            <person name="Mammel M.K."/>
            <person name="McDermott P.F."/>
            <person name="Tartera C."/>
            <person name="White D.G."/>
            <person name="Leclerc J.E."/>
            <person name="Ravel J."/>
            <person name="Cebula T.A."/>
        </authorList>
    </citation>
    <scope>NUCLEOTIDE SEQUENCE [LARGE SCALE GENOMIC DNA]</scope>
    <source>
        <strain>SL254</strain>
    </source>
</reference>
<name>CBPM_SALNS</name>
<feature type="chain" id="PRO_1000137780" description="Chaperone modulatory protein CbpM">
    <location>
        <begin position="1"/>
        <end position="101"/>
    </location>
</feature>
<proteinExistence type="inferred from homology"/>
<comment type="function">
    <text evidence="1">Interacts with CbpA and inhibits both the DnaJ-like co-chaperone activity and the DNA binding activity of CbpA. Together with CbpA, modulates the activity of the DnaK chaperone system. Does not inhibit the co-chaperone activity of DnaJ.</text>
</comment>
<comment type="similarity">
    <text evidence="1">Belongs to the CbpM family.</text>
</comment>
<dbReference type="EMBL" id="CP001113">
    <property type="protein sequence ID" value="ACF65175.1"/>
    <property type="molecule type" value="Genomic_DNA"/>
</dbReference>
<dbReference type="RefSeq" id="WP_001284251.1">
    <property type="nucleotide sequence ID" value="NZ_CCMR01000003.1"/>
</dbReference>
<dbReference type="SMR" id="B4T2U4"/>
<dbReference type="KEGG" id="see:SNSL254_A1206"/>
<dbReference type="HOGENOM" id="CLU_144710_3_1_6"/>
<dbReference type="Proteomes" id="UP000008824">
    <property type="component" value="Chromosome"/>
</dbReference>
<dbReference type="Gene3D" id="1.10.1660.10">
    <property type="match status" value="1"/>
</dbReference>
<dbReference type="HAMAP" id="MF_01155">
    <property type="entry name" value="CbpM"/>
    <property type="match status" value="1"/>
</dbReference>
<dbReference type="InterPro" id="IPR022835">
    <property type="entry name" value="CbpM"/>
</dbReference>
<dbReference type="NCBIfam" id="NF007617">
    <property type="entry name" value="PRK10265.1"/>
    <property type="match status" value="1"/>
</dbReference>
<dbReference type="Pfam" id="PF13591">
    <property type="entry name" value="MerR_2"/>
    <property type="match status" value="1"/>
</dbReference>